<keyword id="KW-1003">Cell membrane</keyword>
<keyword id="KW-0165">Cleavage on pair of basic residues</keyword>
<keyword id="KW-1015">Disulfide bond</keyword>
<keyword id="KW-0895">ERV</keyword>
<keyword id="KW-0325">Glycoprotein</keyword>
<keyword id="KW-0472">Membrane</keyword>
<keyword id="KW-0732">Signal</keyword>
<keyword id="KW-0812">Transmembrane</keyword>
<keyword id="KW-1133">Transmembrane helix</keyword>
<keyword id="KW-0814">Transposable element</keyword>
<keyword id="KW-0261">Viral envelope protein</keyword>
<keyword id="KW-0946">Virion</keyword>
<name>SYCY2_PONPY</name>
<gene>
    <name type="primary">ERVFRD-1</name>
    <name type="synonym">ERVFRDE1</name>
</gene>
<organism>
    <name type="scientific">Pongo pygmaeus</name>
    <name type="common">Bornean orangutan</name>
    <dbReference type="NCBI Taxonomy" id="9600"/>
    <lineage>
        <taxon>Eukaryota</taxon>
        <taxon>Metazoa</taxon>
        <taxon>Chordata</taxon>
        <taxon>Craniata</taxon>
        <taxon>Vertebrata</taxon>
        <taxon>Euteleostomi</taxon>
        <taxon>Mammalia</taxon>
        <taxon>Eutheria</taxon>
        <taxon>Euarchontoglires</taxon>
        <taxon>Primates</taxon>
        <taxon>Haplorrhini</taxon>
        <taxon>Catarrhini</taxon>
        <taxon>Hominidae</taxon>
        <taxon>Pongo</taxon>
    </lineage>
</organism>
<comment type="function">
    <text evidence="1">This endogenous retroviral envelope protein has retained its original fusogenic properties and participates in trophoblast fusion and the formation of a syncytium during placenta morphogenesis. The interaction with MFSD2A is apparently important for this process (By similarity).</text>
</comment>
<comment type="function">
    <text evidence="6">Endogenous envelope proteins may have kept, lost or modified their original function during evolution but this one can still make pseudotypes with MLV, HIV-1 or SIV-1 virions and confer infectivity. Retroviral envelope proteins mediate receptor recognition and membrane fusion during early infection. The surface protein mediates receptor recognition, while the transmembrane protein anchors the envelope heterodimer to the viral membrane through one transmembrane domain. The other hydrophobic domain, called fusion peptide, mediates fusion of the viral membrane with the target cell membrane (PubMed:14694139).</text>
</comment>
<comment type="subunit">
    <text evidence="1">The surface and transmembrane proteins form a heterodimer. They are attached by non-covalent interactions or by a labile interchain disulfide bond (By similarity).</text>
</comment>
<comment type="subcellular location">
    <subcellularLocation>
        <location evidence="7">Virion</location>
    </subcellularLocation>
</comment>
<comment type="subcellular location">
    <molecule>Surface protein</molecule>
    <subcellularLocation>
        <location evidence="7">Cell membrane</location>
        <topology evidence="7">Peripheral membrane protein</topology>
    </subcellularLocation>
    <text evidence="4">The surface protein is not anchored to the membrane, but localizes to the extracellular surface through its binding to TM.</text>
</comment>
<comment type="subcellular location">
    <molecule>Transmembrane protein</molecule>
    <subcellularLocation>
        <location evidence="7">Cell membrane</location>
        <topology evidence="5">Single-pass membrane protein</topology>
    </subcellularLocation>
</comment>
<comment type="domain">
    <text evidence="1">The CKS-17 immunosuppressive domain is present in many retroviral envelope proteins. As a synthetic peptide, it inhibits immune function in vitro and in vivo (By similarity).</text>
</comment>
<comment type="PTM">
    <text evidence="1">Specific enzymatic cleavages in vivo yield the mature SU and TM proteins.</text>
</comment>
<comment type="PTM">
    <text evidence="1">The CXXC motif is highly conserved across a broad range of retroviral envelope proteins. It is thought to participate in the formation of a labile disulfide bond possibly with the CX6CC motif present in the transmembrane protein (By similarity).</text>
</comment>
<comment type="miscellaneous">
    <text>Ortholog of the human HERV-FRD_6p24.1 envelope protein.</text>
</comment>
<comment type="miscellaneous">
    <text>The genome contains a high percentage of proviral-like elements, also called endogenous retroviruses (ERVs) that are the genomic traces of ancient infections of the germline by exogenous retroviruses. Although most of these elements are defective, some have conserved a functional envelope (env) gene, most probably diverted by the host for its benefit.</text>
</comment>
<comment type="similarity">
    <text evidence="7">Belongs to the gamma type-C retroviral envelope protein family. HERV class-I FRD env subfamily.</text>
</comment>
<comment type="caution">
    <text evidence="7">CKS-17 sequence does not match the minimal active consensus.</text>
</comment>
<proteinExistence type="inferred from homology"/>
<evidence type="ECO:0000250" key="1"/>
<evidence type="ECO:0000250" key="2">
    <source>
        <dbReference type="UniProtKB" id="P23064"/>
    </source>
</evidence>
<evidence type="ECO:0000250" key="3">
    <source>
        <dbReference type="UniProtKB" id="P60508"/>
    </source>
</evidence>
<evidence type="ECO:0000250" key="4">
    <source>
        <dbReference type="UniProtKB" id="Q9UQF0"/>
    </source>
</evidence>
<evidence type="ECO:0000255" key="5"/>
<evidence type="ECO:0000269" key="6">
    <source>
    </source>
</evidence>
<evidence type="ECO:0000305" key="7"/>
<feature type="signal peptide" evidence="5">
    <location>
        <begin position="1"/>
        <end position="15"/>
    </location>
</feature>
<feature type="chain" id="PRO_0000008457" description="Syncytin-2">
    <location>
        <begin position="16"/>
        <end position="538"/>
    </location>
</feature>
<feature type="chain" id="PRO_0000008458" description="Surface protein" evidence="1">
    <location>
        <begin position="16"/>
        <end position="350"/>
    </location>
</feature>
<feature type="chain" id="PRO_0000008459" description="Transmembrane protein" evidence="1">
    <location>
        <begin position="351"/>
        <end position="538"/>
    </location>
</feature>
<feature type="topological domain" description="Extracellular" evidence="5">
    <location>
        <begin position="16"/>
        <end position="478"/>
    </location>
</feature>
<feature type="transmembrane region" description="Helical" evidence="5">
    <location>
        <begin position="479"/>
        <end position="499"/>
    </location>
</feature>
<feature type="topological domain" description="Cytoplasmic" evidence="5">
    <location>
        <begin position="500"/>
        <end position="538"/>
    </location>
</feature>
<feature type="region of interest" description="Fusion peptide" evidence="5">
    <location>
        <begin position="354"/>
        <end position="374"/>
    </location>
</feature>
<feature type="short sequence motif" description="CXXC" evidence="7">
    <location>
        <begin position="43"/>
        <end position="46"/>
    </location>
</feature>
<feature type="short sequence motif" description="CKS-17" evidence="1">
    <location>
        <begin position="414"/>
        <end position="430"/>
    </location>
</feature>
<feature type="short sequence motif" description="CX6CC" evidence="7">
    <location>
        <begin position="431"/>
        <end position="439"/>
    </location>
</feature>
<feature type="site" description="Cleavage" evidence="4">
    <location>
        <begin position="350"/>
        <end position="351"/>
    </location>
</feature>
<feature type="glycosylation site" description="N-linked (GlcNAc...) asparagine" evidence="5">
    <location>
        <position position="133"/>
    </location>
</feature>
<feature type="glycosylation site" description="N-linked (GlcNAc...) asparagine" evidence="5">
    <location>
        <position position="146"/>
    </location>
</feature>
<feature type="glycosylation site" description="N-linked (GlcNAc...) asparagine" evidence="5">
    <location>
        <position position="177"/>
    </location>
</feature>
<feature type="glycosylation site" description="N-linked (GlcNAc...) asparagine" evidence="5">
    <location>
        <position position="220"/>
    </location>
</feature>
<feature type="glycosylation site" description="N-linked (GlcNAc...) asparagine" evidence="5">
    <location>
        <position position="241"/>
    </location>
</feature>
<feature type="glycosylation site" description="N-linked (GlcNAc...) asparagine" evidence="5">
    <location>
        <position position="247"/>
    </location>
</feature>
<feature type="glycosylation site" description="N-linked (GlcNAc...) asparagine" evidence="5">
    <location>
        <position position="312"/>
    </location>
</feature>
<feature type="glycosylation site" description="N-linked (GlcNAc...) asparagine" evidence="5">
    <location>
        <position position="332"/>
    </location>
</feature>
<feature type="glycosylation site" description="N-linked (GlcNAc...) asparagine" evidence="5">
    <location>
        <position position="443"/>
    </location>
</feature>
<feature type="disulfide bond" description="Interchain (between SU and TM chains, or C-46 with C-439); in linked form" evidence="4">
    <location>
        <begin position="43"/>
        <end position="439"/>
    </location>
</feature>
<feature type="disulfide bond" evidence="2">
    <location>
        <begin position="43"/>
        <end position="46"/>
    </location>
</feature>
<feature type="disulfide bond" evidence="3">
    <location>
        <begin position="431"/>
        <end position="438"/>
    </location>
</feature>
<dbReference type="EMBL" id="AJ577597">
    <property type="protein sequence ID" value="CAE12264.1"/>
    <property type="molecule type" value="Genomic_DNA"/>
</dbReference>
<dbReference type="RefSeq" id="XP_054347792.2">
    <property type="nucleotide sequence ID" value="XM_054491817.2"/>
</dbReference>
<dbReference type="SMR" id="P61558"/>
<dbReference type="GlyCosmos" id="P61558">
    <property type="glycosylation" value="9 sites, No reported glycans"/>
</dbReference>
<dbReference type="GeneID" id="129038623"/>
<dbReference type="GO" id="GO:0005886">
    <property type="term" value="C:plasma membrane"/>
    <property type="evidence" value="ECO:0007669"/>
    <property type="project" value="UniProtKB-SubCell"/>
</dbReference>
<dbReference type="GO" id="GO:0006949">
    <property type="term" value="P:syncytium formation"/>
    <property type="evidence" value="ECO:0000250"/>
    <property type="project" value="UniProtKB"/>
</dbReference>
<dbReference type="GO" id="GO:0000768">
    <property type="term" value="P:syncytium formation by plasma membrane fusion"/>
    <property type="evidence" value="ECO:0000314"/>
    <property type="project" value="UniProtKB"/>
</dbReference>
<dbReference type="CDD" id="cd09851">
    <property type="entry name" value="HTLV-1-like_HR1-HR2"/>
    <property type="match status" value="1"/>
</dbReference>
<dbReference type="FunFam" id="1.10.287.210:FF:000002">
    <property type="entry name" value="Syncytin-2"/>
    <property type="match status" value="1"/>
</dbReference>
<dbReference type="Gene3D" id="1.10.287.210">
    <property type="match status" value="1"/>
</dbReference>
<dbReference type="InterPro" id="IPR018154">
    <property type="entry name" value="TLV/ENV_coat_polyprotein"/>
</dbReference>
<dbReference type="PANTHER" id="PTHR10424:SF85">
    <property type="entry name" value="SYNCYTIN-2"/>
    <property type="match status" value="1"/>
</dbReference>
<dbReference type="PANTHER" id="PTHR10424">
    <property type="entry name" value="VIRAL ENVELOPE PROTEIN"/>
    <property type="match status" value="1"/>
</dbReference>
<dbReference type="Pfam" id="PF00429">
    <property type="entry name" value="TLV_coat"/>
    <property type="match status" value="1"/>
</dbReference>
<dbReference type="SUPFAM" id="SSF58069">
    <property type="entry name" value="Virus ectodomain"/>
    <property type="match status" value="1"/>
</dbReference>
<reference key="1">
    <citation type="journal article" date="2003" name="Proc. Natl. Acad. Sci. U.S.A.">
        <title>Genomewide screening for fusogenic human endogenous retrovirus envelopes identifies syncytin 2, a gene conserved on primate evolution.</title>
        <authorList>
            <person name="Blaise S."/>
            <person name="de Parseval N."/>
            <person name="Benit L."/>
            <person name="Heidmann T."/>
        </authorList>
    </citation>
    <scope>NUCLEOTIDE SEQUENCE [GENOMIC DNA]</scope>
</reference>
<reference key="2">
    <citation type="journal article" date="2004" name="J. Virol.">
        <title>Identification of an envelope protein from the FRD family of human endogenous retroviruses (HERV-FRD) conferring infectivity and functional conservation among simians.</title>
        <authorList>
            <person name="Blaise S."/>
            <person name="Ruggieri A."/>
            <person name="Dewannieux M."/>
            <person name="Cosset F.-L."/>
            <person name="Heidmann T."/>
        </authorList>
    </citation>
    <scope>FUNCTION</scope>
</reference>
<accession>P61558</accession>
<sequence length="538" mass="59489">MGLLLLVLILTPLLAAHRHPDFPLLEKAQQLLQSTGSPYSTNCWLCTSSSTETPGTAYPASPREWTSIEAELHISYHWDPNLKGLMRPANSLLSTVKQDFPDIRQKPPIFGPIFTNINLMGIAPICVTAKRKNGTNVGTLPSTVCNVTFTVDPNQQTYQTYTHKQFLHQPRFPKPPNITFPQGTLLDKSTRFCQGRPSSCSTRNFWFRPADYNQCLQISNLSSTAEWVLLDQTRNSLFWENKTKGANQSQTPCVQVLAGMTIATSYLGISAVSEFFGTSLTPLFHFHISTCLKTQGAFYICGQSIHQCLPSNWTGTCTIGYVTPDIFIAPGNISLPIPIYGNSQLPRVRRAIHFIPLLAGLGIIAGTGTGIAGITKASLTYSQLSKEIAKNIDTMAKALTTVQEQIDSLAAVVLQNRRGLDMLTAAQGGICLALDEKCCFWVNQSGKVQDNIRQLLNQASSLRERATQGWLNWEGTWKWFSWVLPFTGPLVSLLLLLLFGPCLLNLITQFVLSRLQAIKLQTNLSAGCRPHNIQESPF</sequence>
<protein>
    <recommendedName>
        <fullName>Syncytin-2</fullName>
    </recommendedName>
    <alternativeName>
        <fullName>ERV-FRD provirus ancestral Env polyprotein</fullName>
    </alternativeName>
    <alternativeName>
        <fullName>Envelope polyprotein</fullName>
    </alternativeName>
    <component>
        <recommendedName>
            <fullName>Surface protein</fullName>
            <shortName>SU</shortName>
        </recommendedName>
    </component>
    <component>
        <recommendedName>
            <fullName>Transmembrane protein</fullName>
            <shortName>TM</shortName>
        </recommendedName>
    </component>
</protein>